<comment type="function">
    <text evidence="1 2">Phosphorylates 5-hydroxymethyluracil (5hmdU) into 5-phosphomethyl-2'-deoxyuridine (5-PmdU) on DNA as a step in the pathway leading to thymidine hypermodifications in the viral genome (PubMed:34522950). The phosphate is added internally to the DNA polymer (PubMed:34522950). Also transfers glutamate to 5-pyrophosphoryloxymethyldeoxyuridine (5-PPmdU) to produce 5-Nalpha-glyutamylthymidine (Nalpha-GluT). As a final result of the pathway of hypermodification, 5-aminoethyl-2'-deoxyuridine (5-NedU) substitutes for about 30% of thymidines in the viral DNA (PubMed:29555775, PubMed:34522950). These modifications probably prevent degradation of viral genome by the host restriction-modification antiviral defense system (PubMed:34522950).</text>
</comment>
<comment type="catalytic activity">
    <reaction evidence="2">
        <text>5-hydroxymethyl-dUMP in DNA + ATP = 5-phosphomethyl-dUMP in DNA + ADP + H(+)</text>
        <dbReference type="Rhea" id="RHEA:71543"/>
        <dbReference type="Rhea" id="RHEA-COMP:18039"/>
        <dbReference type="Rhea" id="RHEA-COMP:18041"/>
        <dbReference type="ChEBI" id="CHEBI:15378"/>
        <dbReference type="ChEBI" id="CHEBI:30616"/>
        <dbReference type="ChEBI" id="CHEBI:190917"/>
        <dbReference type="ChEBI" id="CHEBI:190918"/>
        <dbReference type="ChEBI" id="CHEBI:456216"/>
    </reaction>
</comment>
<comment type="similarity">
    <text evidence="4">Belongs to the thymidylate kinase family. 5-hmdU DNA kinase subfamily.</text>
</comment>
<reference key="1">
    <citation type="journal article" date="2006" name="J. Bacteriol.">
        <title>Comparative genomic analysis of 18 Pseudomonas aeruginosa bacteriophages.</title>
        <authorList>
            <person name="Kwan T."/>
            <person name="Liu J."/>
            <person name="Dubow M."/>
            <person name="Gros P."/>
            <person name="Pelletier J."/>
        </authorList>
    </citation>
    <scope>NUCLEOTIDE SEQUENCE [LARGE SCALE GENOMIC DNA]</scope>
</reference>
<reference key="2">
    <citation type="journal article" date="2018" name="Proc. Natl. Acad. Sci. U.S.A.">
        <title>Identification and biosynthesis of thymidine hypermodifications in the genomic DNA of widespread bacterial viruses.</title>
        <authorList>
            <person name="Lee Y.J."/>
            <person name="Dai N."/>
            <person name="Walsh S.E."/>
            <person name="Mueller S."/>
            <person name="Fraser M.E."/>
            <person name="Kauffman K.M."/>
            <person name="Guan C."/>
            <person name="Correa I.R. Jr."/>
            <person name="Weigele P.R."/>
        </authorList>
    </citation>
    <scope>FUNCTION</scope>
</reference>
<reference key="3">
    <citation type="journal article" date="2021" name="Nucleic Acids Res.">
        <title>Pathways of thymidine hypermodification.</title>
        <authorList>
            <person name="Lee Y.J."/>
            <person name="Dai N."/>
            <person name="Mueller S.I."/>
            <person name="Guan C."/>
            <person name="Parker M.J."/>
            <person name="Fraser M.E."/>
            <person name="Walsh S.E."/>
            <person name="Sridar J."/>
            <person name="Mulholland A."/>
            <person name="Nayak K."/>
            <person name="Sun Z."/>
            <person name="Lin Y.C."/>
            <person name="Comb D.G."/>
            <person name="Marks K."/>
            <person name="Gonzalez R."/>
            <person name="Dowling D.P."/>
            <person name="Bandarian V."/>
            <person name="Saleh L."/>
            <person name="Correa I.R."/>
            <person name="Weigele P.R."/>
        </authorList>
    </citation>
    <scope>FUNCTION</scope>
    <scope>CATALYTIC ACTIVITY</scope>
</reference>
<name>HMUDK_BPPM6</name>
<organism>
    <name type="scientific">Pseudomonas phage M6</name>
    <dbReference type="NCBI Taxonomy" id="2911432"/>
    <lineage>
        <taxon>Viruses</taxon>
        <taxon>Duplodnaviria</taxon>
        <taxon>Heunggongvirae</taxon>
        <taxon>Uroviricota</taxon>
        <taxon>Caudoviricetes</taxon>
        <taxon>Mesyanzhinovviridae</taxon>
        <taxon>Rabinowitzvirinae</taxon>
        <taxon>Yuavirus</taxon>
        <taxon>Pseudomonas virus M6</taxon>
    </lineage>
</organism>
<keyword id="KW-0945">Host-virus interaction</keyword>
<keyword id="KW-1090">Inhibition of host innate immune response by virus</keyword>
<keyword id="KW-0418">Kinase</keyword>
<keyword id="KW-1258">Restriction-modification system evasion by virus</keyword>
<keyword id="KW-0808">Transferase</keyword>
<keyword id="KW-0899">Viral immunoevasion</keyword>
<feature type="chain" id="PRO_0000456265" description="5-hmdU DNA kinase">
    <location>
        <begin position="1"/>
        <end position="187"/>
    </location>
</feature>
<sequence>MKYINVRGCNGSGKTTLLRCLARDPLCRVINVIVPDHKPIPVTYAPDGIAIIGDYTPAAAGATTAGLDRIKTQAAAKAVAELVGRDPDVKAVLFEGVVVSTIYGPWQEWSKANGGMIWAFLDTPLEVCLKRIQERNGGKPIKEDQVADKHRTIARVRDKALADGETVRDIHWETALKDIKAVIENLG</sequence>
<accession>P0DTK5</accession>
<evidence type="ECO:0000269" key="1">
    <source>
    </source>
</evidence>
<evidence type="ECO:0000269" key="2">
    <source>
    </source>
</evidence>
<evidence type="ECO:0000303" key="3">
    <source>
    </source>
</evidence>
<evidence type="ECO:0000305" key="4"/>
<organismHost>
    <name type="scientific">Pseudomonas aeruginosa</name>
    <dbReference type="NCBI Taxonomy" id="287"/>
</organismHost>
<protein>
    <recommendedName>
        <fullName evidence="3">5-hmdU DNA kinase</fullName>
    </recommendedName>
    <alternativeName>
        <fullName evidence="3">5-hydroxymethyluracil DNA kinase</fullName>
    </alternativeName>
    <alternativeName>
        <fullName evidence="3">P-loop kinase</fullName>
    </alternativeName>
    <alternativeName>
        <fullName evidence="3">gp54</fullName>
    </alternativeName>
</protein>
<proteinExistence type="evidence at protein level"/>
<dbReference type="EMBL" id="DQ163916">
    <property type="status" value="NOT_ANNOTATED_CDS"/>
    <property type="molecule type" value="Genomic_DNA"/>
</dbReference>
<dbReference type="RefSeq" id="YP_001294562.1">
    <property type="nucleotide sequence ID" value="NC_007809.1"/>
</dbReference>
<dbReference type="SMR" id="P0DTK5"/>
<dbReference type="GeneID" id="5237077"/>
<dbReference type="GO" id="GO:0016301">
    <property type="term" value="F:kinase activity"/>
    <property type="evidence" value="ECO:0007669"/>
    <property type="project" value="UniProtKB-KW"/>
</dbReference>
<dbReference type="GO" id="GO:0099018">
    <property type="term" value="P:symbiont-mediated evasion of host restriction-modification system"/>
    <property type="evidence" value="ECO:0007669"/>
    <property type="project" value="UniProtKB-KW"/>
</dbReference>
<dbReference type="GO" id="GO:0052170">
    <property type="term" value="P:symbiont-mediated suppression of host innate immune response"/>
    <property type="evidence" value="ECO:0007669"/>
    <property type="project" value="UniProtKB-KW"/>
</dbReference>
<dbReference type="Gene3D" id="3.40.50.300">
    <property type="entry name" value="P-loop containing nucleotide triphosphate hydrolases"/>
    <property type="match status" value="1"/>
</dbReference>
<dbReference type="InterPro" id="IPR040924">
    <property type="entry name" value="HMUDK/HMUD1"/>
</dbReference>
<dbReference type="InterPro" id="IPR027417">
    <property type="entry name" value="P-loop_NTPase"/>
</dbReference>
<dbReference type="Pfam" id="PF18748">
    <property type="entry name" value="HMUDK_HMUD1"/>
    <property type="match status" value="1"/>
</dbReference>
<dbReference type="SUPFAM" id="SSF52540">
    <property type="entry name" value="P-loop containing nucleoside triphosphate hydrolases"/>
    <property type="match status" value="1"/>
</dbReference>